<reference key="1">
    <citation type="journal article" date="2005" name="Proc. Natl. Acad. Sci. U.S.A.">
        <title>Complete genome sequencing of Anaplasma marginale reveals that the surface is skewed to two superfamilies of outer membrane proteins.</title>
        <authorList>
            <person name="Brayton K.A."/>
            <person name="Kappmeyer L.S."/>
            <person name="Herndon D.R."/>
            <person name="Dark M.J."/>
            <person name="Tibbals D.L."/>
            <person name="Palmer G.H."/>
            <person name="McGuire T.C."/>
            <person name="Knowles D.P. Jr."/>
        </authorList>
    </citation>
    <scope>NUCLEOTIDE SEQUENCE [LARGE SCALE GENOMIC DNA]</scope>
    <source>
        <strain>St. Maries</strain>
    </source>
</reference>
<sequence>MQWREMGVVMGTRPYGDEHLLLSILTRNRGLRRGLTRFTKKRPLQIGDLIDATWRAKLPTNLGHFTCEVIASAFYSYFRDRIKLMCLSSITHIMSTALPENEPHPTLYDSFQDFAAAAEAEAPWYNHYLKLELLVLSQLGFALDLSKCAVSNSKDNLLFISPKTGRALSEAVGCAYRDKLLPLPKVLRSISCGVETECCSADEFALSLRILGFFLRRHLLQESHTFQESRKILTGLLG</sequence>
<dbReference type="EMBL" id="CP000030">
    <property type="protein sequence ID" value="AAV86657.1"/>
    <property type="molecule type" value="Genomic_DNA"/>
</dbReference>
<dbReference type="RefSeq" id="WP_011114390.1">
    <property type="nucleotide sequence ID" value="NC_004842.2"/>
</dbReference>
<dbReference type="SMR" id="Q5PAM3"/>
<dbReference type="KEGG" id="ama:AM680"/>
<dbReference type="HOGENOM" id="CLU_086029_0_0_5"/>
<dbReference type="GO" id="GO:0043590">
    <property type="term" value="C:bacterial nucleoid"/>
    <property type="evidence" value="ECO:0007669"/>
    <property type="project" value="TreeGrafter"/>
</dbReference>
<dbReference type="GO" id="GO:0006310">
    <property type="term" value="P:DNA recombination"/>
    <property type="evidence" value="ECO:0007669"/>
    <property type="project" value="UniProtKB-UniRule"/>
</dbReference>
<dbReference type="GO" id="GO:0006302">
    <property type="term" value="P:double-strand break repair"/>
    <property type="evidence" value="ECO:0007669"/>
    <property type="project" value="TreeGrafter"/>
</dbReference>
<dbReference type="Gene3D" id="1.20.1440.120">
    <property type="entry name" value="Recombination protein O, C-terminal domain"/>
    <property type="match status" value="1"/>
</dbReference>
<dbReference type="HAMAP" id="MF_00201">
    <property type="entry name" value="RecO"/>
    <property type="match status" value="1"/>
</dbReference>
<dbReference type="InterPro" id="IPR037278">
    <property type="entry name" value="ARFGAP/RecO"/>
</dbReference>
<dbReference type="InterPro" id="IPR022572">
    <property type="entry name" value="DNA_rep/recomb_RecO_N"/>
</dbReference>
<dbReference type="InterPro" id="IPR003717">
    <property type="entry name" value="RecO"/>
</dbReference>
<dbReference type="InterPro" id="IPR042242">
    <property type="entry name" value="RecO_C"/>
</dbReference>
<dbReference type="NCBIfam" id="TIGR00613">
    <property type="entry name" value="reco"/>
    <property type="match status" value="1"/>
</dbReference>
<dbReference type="PANTHER" id="PTHR33991">
    <property type="entry name" value="DNA REPAIR PROTEIN RECO"/>
    <property type="match status" value="1"/>
</dbReference>
<dbReference type="PANTHER" id="PTHR33991:SF1">
    <property type="entry name" value="DNA REPAIR PROTEIN RECO"/>
    <property type="match status" value="1"/>
</dbReference>
<dbReference type="Pfam" id="PF02565">
    <property type="entry name" value="RecO_C"/>
    <property type="match status" value="1"/>
</dbReference>
<dbReference type="Pfam" id="PF11967">
    <property type="entry name" value="RecO_N"/>
    <property type="match status" value="1"/>
</dbReference>
<dbReference type="SUPFAM" id="SSF57863">
    <property type="entry name" value="ArfGap/RecO-like zinc finger"/>
    <property type="match status" value="1"/>
</dbReference>
<keyword id="KW-0227">DNA damage</keyword>
<keyword id="KW-0233">DNA recombination</keyword>
<keyword id="KW-0234">DNA repair</keyword>
<organism>
    <name type="scientific">Anaplasma marginale (strain St. Maries)</name>
    <dbReference type="NCBI Taxonomy" id="234826"/>
    <lineage>
        <taxon>Bacteria</taxon>
        <taxon>Pseudomonadati</taxon>
        <taxon>Pseudomonadota</taxon>
        <taxon>Alphaproteobacteria</taxon>
        <taxon>Rickettsiales</taxon>
        <taxon>Anaplasmataceae</taxon>
        <taxon>Anaplasma</taxon>
    </lineage>
</organism>
<name>RECO_ANAMM</name>
<protein>
    <recommendedName>
        <fullName evidence="1">DNA repair protein RecO</fullName>
    </recommendedName>
    <alternativeName>
        <fullName evidence="1">Recombination protein O</fullName>
    </alternativeName>
</protein>
<gene>
    <name evidence="1" type="primary">recO</name>
    <name type="ordered locus">AM680</name>
</gene>
<proteinExistence type="inferred from homology"/>
<evidence type="ECO:0000255" key="1">
    <source>
        <dbReference type="HAMAP-Rule" id="MF_00201"/>
    </source>
</evidence>
<feature type="chain" id="PRO_1000193352" description="DNA repair protein RecO">
    <location>
        <begin position="1"/>
        <end position="238"/>
    </location>
</feature>
<accession>Q5PAM3</accession>
<comment type="function">
    <text evidence="1">Involved in DNA repair and RecF pathway recombination.</text>
</comment>
<comment type="similarity">
    <text evidence="1">Belongs to the RecO family.</text>
</comment>